<dbReference type="EMBL" id="CP000730">
    <property type="protein sequence ID" value="ABX29649.1"/>
    <property type="molecule type" value="Genomic_DNA"/>
</dbReference>
<dbReference type="RefSeq" id="WP_000368902.1">
    <property type="nucleotide sequence ID" value="NC_010079.1"/>
</dbReference>
<dbReference type="SMR" id="A8Z2H1"/>
<dbReference type="KEGG" id="sax:USA300HOU_1642"/>
<dbReference type="HOGENOM" id="CLU_128147_0_0_9"/>
<dbReference type="BioCyc" id="SAUR451516-HMP:GTV5-1662-MONOMER"/>
<dbReference type="Gene3D" id="3.30.70.260">
    <property type="match status" value="1"/>
</dbReference>
<dbReference type="HAMAP" id="MF_00707">
    <property type="entry name" value="UPF0735"/>
    <property type="match status" value="1"/>
</dbReference>
<dbReference type="InterPro" id="IPR045865">
    <property type="entry name" value="ACT-like_dom_sf"/>
</dbReference>
<dbReference type="InterPro" id="IPR002912">
    <property type="entry name" value="ACT_dom"/>
</dbReference>
<dbReference type="InterPro" id="IPR008310">
    <property type="entry name" value="UPF0735_ACT_dom-cont"/>
</dbReference>
<dbReference type="NCBIfam" id="NF003361">
    <property type="entry name" value="PRK04435.1"/>
    <property type="match status" value="1"/>
</dbReference>
<dbReference type="PIRSF" id="PIRSF025624">
    <property type="entry name" value="ACT_PheB"/>
    <property type="match status" value="1"/>
</dbReference>
<dbReference type="SUPFAM" id="SSF55021">
    <property type="entry name" value="ACT-like"/>
    <property type="match status" value="1"/>
</dbReference>
<dbReference type="PROSITE" id="PS51671">
    <property type="entry name" value="ACT"/>
    <property type="match status" value="1"/>
</dbReference>
<evidence type="ECO:0000255" key="1">
    <source>
        <dbReference type="HAMAP-Rule" id="MF_00707"/>
    </source>
</evidence>
<sequence length="151" mass="17343">MDNKDYKKFYLIREDVLPESVVKTLKIKDALKSDPTLSIYDAVKQFDLSRSAFYKYRETIFPVDDKMLDHREFTLILYVTDIVGMLARVLDVISKLELSVLTIHQSIPMEEKATITLSLNAKSKETSVEDVIGALRNLDYVSKVELISMSM</sequence>
<proteinExistence type="inferred from homology"/>
<protein>
    <recommendedName>
        <fullName evidence="1">UPF0735 ACT domain-containing protein USA300HOU_1642</fullName>
    </recommendedName>
</protein>
<accession>A8Z2H1</accession>
<comment type="similarity">
    <text evidence="1">Belongs to the UPF0735 family.</text>
</comment>
<gene>
    <name type="ordered locus">USA300HOU_1642</name>
</gene>
<reference key="1">
    <citation type="journal article" date="2007" name="BMC Microbiol.">
        <title>Subtle genetic changes enhance virulence of methicillin resistant and sensitive Staphylococcus aureus.</title>
        <authorList>
            <person name="Highlander S.K."/>
            <person name="Hulten K.G."/>
            <person name="Qin X."/>
            <person name="Jiang H."/>
            <person name="Yerrapragada S."/>
            <person name="Mason E.O. Jr."/>
            <person name="Shang Y."/>
            <person name="Williams T.M."/>
            <person name="Fortunov R.M."/>
            <person name="Liu Y."/>
            <person name="Igboeli O."/>
            <person name="Petrosino J."/>
            <person name="Tirumalai M."/>
            <person name="Uzman A."/>
            <person name="Fox G.E."/>
            <person name="Cardenas A.M."/>
            <person name="Muzny D.M."/>
            <person name="Hemphill L."/>
            <person name="Ding Y."/>
            <person name="Dugan S."/>
            <person name="Blyth P.R."/>
            <person name="Buhay C.J."/>
            <person name="Dinh H.H."/>
            <person name="Hawes A.C."/>
            <person name="Holder M."/>
            <person name="Kovar C.L."/>
            <person name="Lee S.L."/>
            <person name="Liu W."/>
            <person name="Nazareth L.V."/>
            <person name="Wang Q."/>
            <person name="Zhou J."/>
            <person name="Kaplan S.L."/>
            <person name="Weinstock G.M."/>
        </authorList>
    </citation>
    <scope>NUCLEOTIDE SEQUENCE [LARGE SCALE GENOMIC DNA]</scope>
    <source>
        <strain>USA300 / TCH1516</strain>
    </source>
</reference>
<feature type="chain" id="PRO_0000366322" description="UPF0735 ACT domain-containing protein USA300HOU_1642">
    <location>
        <begin position="1"/>
        <end position="151"/>
    </location>
</feature>
<feature type="domain" description="ACT" evidence="1">
    <location>
        <begin position="74"/>
        <end position="149"/>
    </location>
</feature>
<organism>
    <name type="scientific">Staphylococcus aureus (strain USA300 / TCH1516)</name>
    <dbReference type="NCBI Taxonomy" id="451516"/>
    <lineage>
        <taxon>Bacteria</taxon>
        <taxon>Bacillati</taxon>
        <taxon>Bacillota</taxon>
        <taxon>Bacilli</taxon>
        <taxon>Bacillales</taxon>
        <taxon>Staphylococcaceae</taxon>
        <taxon>Staphylococcus</taxon>
    </lineage>
</organism>
<name>Y1642_STAAT</name>